<protein>
    <recommendedName>
        <fullName evidence="1">Glycine--tRNA ligase</fullName>
        <ecNumber evidence="1">6.1.1.14</ecNumber>
    </recommendedName>
    <alternativeName>
        <fullName evidence="1">Glycyl-tRNA synthetase</fullName>
        <shortName evidence="1">GlyRS</shortName>
    </alternativeName>
</protein>
<evidence type="ECO:0000255" key="1">
    <source>
        <dbReference type="HAMAP-Rule" id="MF_00253"/>
    </source>
</evidence>
<gene>
    <name evidence="1" type="primary">glyQS</name>
    <name type="ordered locus">TT_C0175</name>
</gene>
<reference key="1">
    <citation type="journal article" date="2004" name="Nat. Biotechnol.">
        <title>The genome sequence of the extreme thermophile Thermus thermophilus.</title>
        <authorList>
            <person name="Henne A."/>
            <person name="Brueggemann H."/>
            <person name="Raasch C."/>
            <person name="Wiezer A."/>
            <person name="Hartsch T."/>
            <person name="Liesegang H."/>
            <person name="Johann A."/>
            <person name="Lienard T."/>
            <person name="Gohl O."/>
            <person name="Martinez-Arias R."/>
            <person name="Jacobi C."/>
            <person name="Starkuviene V."/>
            <person name="Schlenczeck S."/>
            <person name="Dencker S."/>
            <person name="Huber R."/>
            <person name="Klenk H.-P."/>
            <person name="Kramer W."/>
            <person name="Merkl R."/>
            <person name="Gottschalk G."/>
            <person name="Fritz H.-J."/>
        </authorList>
    </citation>
    <scope>NUCLEOTIDE SEQUENCE [LARGE SCALE GENOMIC DNA]</scope>
    <source>
        <strain>ATCC BAA-163 / DSM 7039 / HB27</strain>
    </source>
</reference>
<feature type="chain" id="PRO_0000072982" description="Glycine--tRNA ligase">
    <location>
        <begin position="1"/>
        <end position="506"/>
    </location>
</feature>
<feature type="binding site" evidence="1">
    <location>
        <position position="99"/>
    </location>
    <ligand>
        <name>substrate</name>
    </ligand>
</feature>
<feature type="binding site" evidence="1">
    <location>
        <position position="189"/>
    </location>
    <ligand>
        <name>substrate</name>
    </ligand>
</feature>
<feature type="binding site" evidence="1">
    <location>
        <begin position="221"/>
        <end position="223"/>
    </location>
    <ligand>
        <name>ATP</name>
        <dbReference type="ChEBI" id="CHEBI:30616"/>
    </ligand>
</feature>
<feature type="binding site" evidence="1">
    <location>
        <begin position="231"/>
        <end position="236"/>
    </location>
    <ligand>
        <name>ATP</name>
        <dbReference type="ChEBI" id="CHEBI:30616"/>
    </ligand>
</feature>
<feature type="binding site" evidence="1">
    <location>
        <begin position="236"/>
        <end position="240"/>
    </location>
    <ligand>
        <name>substrate</name>
    </ligand>
</feature>
<feature type="binding site" evidence="1">
    <location>
        <begin position="305"/>
        <end position="306"/>
    </location>
    <ligand>
        <name>ATP</name>
        <dbReference type="ChEBI" id="CHEBI:30616"/>
    </ligand>
</feature>
<feature type="binding site" evidence="1">
    <location>
        <begin position="360"/>
        <end position="364"/>
    </location>
    <ligand>
        <name>substrate</name>
    </ligand>
</feature>
<feature type="binding site" evidence="1">
    <location>
        <begin position="364"/>
        <end position="367"/>
    </location>
    <ligand>
        <name>ATP</name>
        <dbReference type="ChEBI" id="CHEBI:30616"/>
    </ligand>
</feature>
<proteinExistence type="inferred from homology"/>
<keyword id="KW-0030">Aminoacyl-tRNA synthetase</keyword>
<keyword id="KW-0067">ATP-binding</keyword>
<keyword id="KW-0963">Cytoplasm</keyword>
<keyword id="KW-0436">Ligase</keyword>
<keyword id="KW-0547">Nucleotide-binding</keyword>
<keyword id="KW-0648">Protein biosynthesis</keyword>
<name>SYG_THET2</name>
<dbReference type="EC" id="6.1.1.14" evidence="1"/>
<dbReference type="EMBL" id="AE017221">
    <property type="protein sequence ID" value="AAS80523.1"/>
    <property type="molecule type" value="Genomic_DNA"/>
</dbReference>
<dbReference type="RefSeq" id="WP_011172630.1">
    <property type="nucleotide sequence ID" value="NC_005835.1"/>
</dbReference>
<dbReference type="SMR" id="Q72L85"/>
<dbReference type="KEGG" id="tth:TT_C0175"/>
<dbReference type="eggNOG" id="COG0423">
    <property type="taxonomic scope" value="Bacteria"/>
</dbReference>
<dbReference type="HOGENOM" id="CLU_015515_2_1_0"/>
<dbReference type="OrthoDB" id="9760853at2"/>
<dbReference type="Proteomes" id="UP000000592">
    <property type="component" value="Chromosome"/>
</dbReference>
<dbReference type="GO" id="GO:0005737">
    <property type="term" value="C:cytoplasm"/>
    <property type="evidence" value="ECO:0007669"/>
    <property type="project" value="UniProtKB-SubCell"/>
</dbReference>
<dbReference type="GO" id="GO:0005524">
    <property type="term" value="F:ATP binding"/>
    <property type="evidence" value="ECO:0007669"/>
    <property type="project" value="UniProtKB-UniRule"/>
</dbReference>
<dbReference type="GO" id="GO:0004820">
    <property type="term" value="F:glycine-tRNA ligase activity"/>
    <property type="evidence" value="ECO:0000250"/>
    <property type="project" value="UniProtKB"/>
</dbReference>
<dbReference type="GO" id="GO:0046983">
    <property type="term" value="F:protein dimerization activity"/>
    <property type="evidence" value="ECO:0000250"/>
    <property type="project" value="UniProtKB"/>
</dbReference>
<dbReference type="GO" id="GO:0006426">
    <property type="term" value="P:glycyl-tRNA aminoacylation"/>
    <property type="evidence" value="ECO:0007669"/>
    <property type="project" value="UniProtKB-UniRule"/>
</dbReference>
<dbReference type="CDD" id="cd00774">
    <property type="entry name" value="GlyRS-like_core"/>
    <property type="match status" value="1"/>
</dbReference>
<dbReference type="CDD" id="cd00858">
    <property type="entry name" value="GlyRS_anticodon"/>
    <property type="match status" value="1"/>
</dbReference>
<dbReference type="FunFam" id="3.40.50.800:FF:000052">
    <property type="entry name" value="Glycine--tRNA ligase"/>
    <property type="match status" value="1"/>
</dbReference>
<dbReference type="Gene3D" id="3.30.40.230">
    <property type="match status" value="1"/>
</dbReference>
<dbReference type="Gene3D" id="3.40.50.800">
    <property type="entry name" value="Anticodon-binding domain"/>
    <property type="match status" value="1"/>
</dbReference>
<dbReference type="Gene3D" id="3.30.930.10">
    <property type="entry name" value="Bira Bifunctional Protein, Domain 2"/>
    <property type="match status" value="1"/>
</dbReference>
<dbReference type="HAMAP" id="MF_00253_B">
    <property type="entry name" value="Gly_tRNA_synth_B"/>
    <property type="match status" value="1"/>
</dbReference>
<dbReference type="InterPro" id="IPR002314">
    <property type="entry name" value="aa-tRNA-synt_IIb"/>
</dbReference>
<dbReference type="InterPro" id="IPR006195">
    <property type="entry name" value="aa-tRNA-synth_II"/>
</dbReference>
<dbReference type="InterPro" id="IPR045864">
    <property type="entry name" value="aa-tRNA-synth_II/BPL/LPL"/>
</dbReference>
<dbReference type="InterPro" id="IPR004154">
    <property type="entry name" value="Anticodon-bd"/>
</dbReference>
<dbReference type="InterPro" id="IPR036621">
    <property type="entry name" value="Anticodon-bd_dom_sf"/>
</dbReference>
<dbReference type="InterPro" id="IPR027031">
    <property type="entry name" value="Gly-tRNA_synthase/POLG2"/>
</dbReference>
<dbReference type="InterPro" id="IPR022961">
    <property type="entry name" value="Gly_tRNA_ligase_bac"/>
</dbReference>
<dbReference type="InterPro" id="IPR033731">
    <property type="entry name" value="GlyRS-like_core"/>
</dbReference>
<dbReference type="InterPro" id="IPR002315">
    <property type="entry name" value="tRNA-synt_gly"/>
</dbReference>
<dbReference type="NCBIfam" id="TIGR00389">
    <property type="entry name" value="glyS_dimeric"/>
    <property type="match status" value="1"/>
</dbReference>
<dbReference type="NCBIfam" id="NF003211">
    <property type="entry name" value="PRK04173.1"/>
    <property type="match status" value="1"/>
</dbReference>
<dbReference type="PANTHER" id="PTHR10745:SF8">
    <property type="entry name" value="DNA POLYMERASE SUBUNIT GAMMA-2, MITOCHONDRIAL"/>
    <property type="match status" value="1"/>
</dbReference>
<dbReference type="PANTHER" id="PTHR10745">
    <property type="entry name" value="GLYCYL-TRNA SYNTHETASE/DNA POLYMERASE SUBUNIT GAMMA-2"/>
    <property type="match status" value="1"/>
</dbReference>
<dbReference type="Pfam" id="PF03129">
    <property type="entry name" value="HGTP_anticodon"/>
    <property type="match status" value="1"/>
</dbReference>
<dbReference type="Pfam" id="PF00587">
    <property type="entry name" value="tRNA-synt_2b"/>
    <property type="match status" value="1"/>
</dbReference>
<dbReference type="PRINTS" id="PR01043">
    <property type="entry name" value="TRNASYNTHGLY"/>
</dbReference>
<dbReference type="SUPFAM" id="SSF52954">
    <property type="entry name" value="Class II aaRS ABD-related"/>
    <property type="match status" value="1"/>
</dbReference>
<dbReference type="SUPFAM" id="SSF55681">
    <property type="entry name" value="Class II aaRS and biotin synthetases"/>
    <property type="match status" value="1"/>
</dbReference>
<dbReference type="PROSITE" id="PS50862">
    <property type="entry name" value="AA_TRNA_LIGASE_II"/>
    <property type="match status" value="1"/>
</dbReference>
<organism>
    <name type="scientific">Thermus thermophilus (strain ATCC BAA-163 / DSM 7039 / HB27)</name>
    <dbReference type="NCBI Taxonomy" id="262724"/>
    <lineage>
        <taxon>Bacteria</taxon>
        <taxon>Thermotogati</taxon>
        <taxon>Deinococcota</taxon>
        <taxon>Deinococci</taxon>
        <taxon>Thermales</taxon>
        <taxon>Thermaceae</taxon>
        <taxon>Thermus</taxon>
    </lineage>
</organism>
<sequence length="506" mass="58272">MPASSLDELVALCKRRGFIFQSSEIYGGLQGVYDYGPLGVELKNNLKQAWWRRNVYERDDMEGLDASVLTHRLVLHYSGHEATFADPMVDNRITKKRYRLDHLLKEQPEEVLKRLYRAMEVEEGNLHALVQAMMQAPERAGGAMTAAGVLDPASGEPGDWTPPRYFNMMFKTYVGPVEDEAALAYLRPETAQGIFVNFKNVLDATSRKLPFGIAQIGKAFRNEITPRNFIFRVREFEQMEIEYFVRPGEDEYWHRYWVEERLKWWQEMGLSRENLVPYEQPPEELAHYAKATVDILYRFPHGLEELEGIANRTDFDLGSHTKDQEALGITARVLRNEHSTQRLAYRDPETGKWFVPYVIEPSAGVDRGVLALLAEAFTREELPNGEERIVLKLKPQLAPIKVAVIPLVKNRPEITEYAKRLKARLLALGLGRVLYEDTGNIGKAYRRHDEVGTPFAVTVDYDTIGQSKDGTTRLKDTVTVRDRDTMEQIRLHVDELEGFLRERLKW</sequence>
<accession>Q72L85</accession>
<comment type="function">
    <text evidence="1">Catalyzes the attachment of glycine to tRNA(Gly).</text>
</comment>
<comment type="catalytic activity">
    <reaction evidence="1">
        <text>tRNA(Gly) + glycine + ATP = glycyl-tRNA(Gly) + AMP + diphosphate</text>
        <dbReference type="Rhea" id="RHEA:16013"/>
        <dbReference type="Rhea" id="RHEA-COMP:9664"/>
        <dbReference type="Rhea" id="RHEA-COMP:9683"/>
        <dbReference type="ChEBI" id="CHEBI:30616"/>
        <dbReference type="ChEBI" id="CHEBI:33019"/>
        <dbReference type="ChEBI" id="CHEBI:57305"/>
        <dbReference type="ChEBI" id="CHEBI:78442"/>
        <dbReference type="ChEBI" id="CHEBI:78522"/>
        <dbReference type="ChEBI" id="CHEBI:456215"/>
        <dbReference type="EC" id="6.1.1.14"/>
    </reaction>
</comment>
<comment type="subunit">
    <text evidence="1">Homodimer.</text>
</comment>
<comment type="subcellular location">
    <subcellularLocation>
        <location evidence="1">Cytoplasm</location>
    </subcellularLocation>
</comment>
<comment type="similarity">
    <text evidence="1">Belongs to the class-II aminoacyl-tRNA synthetase family.</text>
</comment>